<reference key="1">
    <citation type="journal article" date="1993" name="Biochem. Biophys. Res. Commun.">
        <title>A gene encoding the 16-kDa proteolipid subunit of Enterococcus hirae Na(+)-ATPase complex.</title>
        <authorList>
            <person name="Kakinuma Y."/>
            <person name="Kakinuma S."/>
            <person name="Takase K."/>
            <person name="Konishi K."/>
            <person name="Igarashi K."/>
            <person name="Yamato I."/>
        </authorList>
    </citation>
    <scope>NUCLEOTIDE SEQUENCE [GENOMIC DNA]</scope>
    <scope>PROTEIN SEQUENCE OF 84-95</scope>
    <source>
        <strain>ATCC 9790 / DSM 20160 / JCM 8729 / LMG 6399 / NBRC 3181 / NCIMB 6459 / NCDO 1258 / NCTC 12367 / WDCM 00089 / R</strain>
    </source>
</reference>
<reference key="2">
    <citation type="journal article" date="1994" name="J. Biol. Chem.">
        <title>Sequencing and characterization of the ntp gene cluster for vacuolar-type Na(+)-translocating ATPase of Enterococcus hirae.</title>
        <authorList>
            <person name="Takase K."/>
            <person name="Kakinuma S."/>
            <person name="Yamato I."/>
            <person name="Konishi K."/>
            <person name="Igarashi K."/>
            <person name="Kakinuma Y."/>
        </authorList>
    </citation>
    <scope>NUCLEOTIDE SEQUENCE [GENOMIC DNA]</scope>
    <source>
        <strain>ATCC 9790 / DSM 20160 / JCM 8729 / LMG 6399 / NBRC 3181 / NCIMB 6459 / NCDO 1258 / NCTC 12367 / WDCM 00089 / R</strain>
    </source>
</reference>
<reference key="3">
    <citation type="journal article" date="1994" name="J. Biol. Chem.">
        <title>Operon of vacuolar-type Na(+)-ATPase of Enterococcus hirae.</title>
        <authorList>
            <person name="Solioz M."/>
            <person name="Davies K."/>
        </authorList>
    </citation>
    <scope>NUCLEOTIDE SEQUENCE [GENOMIC DNA]</scope>
    <source>
        <strain>ATCC 9790 / DSM 20160 / JCM 8729 / LMG 6399 / NBRC 3181 / NCIMB 6459 / NCDO 1258 / NCTC 12367 / WDCM 00089 / R</strain>
    </source>
</reference>
<reference key="4">
    <citation type="journal article" date="2012" name="J. Bacteriol.">
        <title>Genome sequence of Enterococcus hirae (Streptococcus faecalis) ATCC 9790, a model organism for the study of ion transport, bioenergetics, and copper homeostasis.</title>
        <authorList>
            <person name="Gaechter T."/>
            <person name="Wunderlin C."/>
            <person name="Schmidheini T."/>
            <person name="Solioz M."/>
        </authorList>
    </citation>
    <scope>NUCLEOTIDE SEQUENCE [LARGE SCALE GENOMIC DNA]</scope>
    <source>
        <strain>ATCC 9790 / DSM 20160 / JCM 8729 / LMG 6399 / NBRC 3181 / NCIMB 6459 / NCDO 1258 / NCTC 12367 / WDCM 00089 / R</strain>
    </source>
</reference>
<feature type="chain" id="PRO_0000071781" description="V-type sodium ATPase subunit K">
    <location>
        <begin position="1"/>
        <end position="156"/>
    </location>
</feature>
<feature type="transmembrane region" description="Helical" evidence="1">
    <location>
        <begin position="11"/>
        <end position="31"/>
    </location>
</feature>
<feature type="transmembrane region" description="Helical" evidence="1">
    <location>
        <begin position="60"/>
        <end position="80"/>
    </location>
</feature>
<feature type="transmembrane region" description="Helical" evidence="1">
    <location>
        <begin position="89"/>
        <end position="109"/>
    </location>
</feature>
<feature type="transmembrane region" description="Helical" evidence="1">
    <location>
        <begin position="132"/>
        <end position="152"/>
    </location>
</feature>
<feature type="helix" evidence="3">
    <location>
        <begin position="2"/>
        <end position="7"/>
    </location>
</feature>
<feature type="turn" evidence="4">
    <location>
        <begin position="8"/>
        <end position="11"/>
    </location>
</feature>
<feature type="helix" evidence="3">
    <location>
        <begin position="12"/>
        <end position="45"/>
    </location>
</feature>
<feature type="helix" evidence="3">
    <location>
        <begin position="49"/>
        <end position="51"/>
    </location>
</feature>
<feature type="helix" evidence="3">
    <location>
        <begin position="52"/>
        <end position="60"/>
    </location>
</feature>
<feature type="helix" evidence="3">
    <location>
        <begin position="61"/>
        <end position="63"/>
    </location>
</feature>
<feature type="helix" evidence="3">
    <location>
        <begin position="64"/>
        <end position="78"/>
    </location>
</feature>
<feature type="strand" evidence="5">
    <location>
        <begin position="82"/>
        <end position="84"/>
    </location>
</feature>
<feature type="helix" evidence="3">
    <location>
        <begin position="86"/>
        <end position="123"/>
    </location>
</feature>
<feature type="helix" evidence="3">
    <location>
        <begin position="125"/>
        <end position="127"/>
    </location>
</feature>
<feature type="helix" evidence="3">
    <location>
        <begin position="128"/>
        <end position="136"/>
    </location>
</feature>
<feature type="helix" evidence="3">
    <location>
        <begin position="139"/>
        <end position="155"/>
    </location>
</feature>
<name>NTPK_ENTHA</name>
<keyword id="KW-0002">3D-structure</keyword>
<keyword id="KW-1003">Cell membrane</keyword>
<keyword id="KW-0903">Direct protein sequencing</keyword>
<keyword id="KW-0406">Ion transport</keyword>
<keyword id="KW-0472">Membrane</keyword>
<keyword id="KW-0915">Sodium</keyword>
<keyword id="KW-0739">Sodium transport</keyword>
<keyword id="KW-0812">Transmembrane</keyword>
<keyword id="KW-1133">Transmembrane helix</keyword>
<keyword id="KW-0813">Transport</keyword>
<dbReference type="EMBL" id="D16334">
    <property type="protein sequence ID" value="BAA03841.1"/>
    <property type="molecule type" value="Genomic_DNA"/>
</dbReference>
<dbReference type="EMBL" id="D17462">
    <property type="protein sequence ID" value="BAA04271.1"/>
    <property type="molecule type" value="Genomic_DNA"/>
</dbReference>
<dbReference type="EMBL" id="X76913">
    <property type="protein sequence ID" value="CAA54237.1"/>
    <property type="molecule type" value="Genomic_DNA"/>
</dbReference>
<dbReference type="EMBL" id="CP003504">
    <property type="protein sequence ID" value="AFM70575.1"/>
    <property type="molecule type" value="Genomic_DNA"/>
</dbReference>
<dbReference type="PIR" id="C54392">
    <property type="entry name" value="C54392"/>
</dbReference>
<dbReference type="RefSeq" id="WP_010738015.1">
    <property type="nucleotide sequence ID" value="NZ_KB946231.1"/>
</dbReference>
<dbReference type="PDB" id="2BL2">
    <property type="method" value="X-ray"/>
    <property type="resolution" value="2.10 A"/>
    <property type="chains" value="A/B/C/D/E/F/G/H/I/J=1-156"/>
</dbReference>
<dbReference type="PDB" id="2CYD">
    <property type="method" value="X-ray"/>
    <property type="resolution" value="2.80 A"/>
    <property type="chains" value="A/B/C/D/E/F/G/H/I/J=1-156"/>
</dbReference>
<dbReference type="PDB" id="2DB4">
    <property type="method" value="X-ray"/>
    <property type="resolution" value="2.40 A"/>
    <property type="chains" value="A/B/C/D/E/F/G/H/I/J=1-156"/>
</dbReference>
<dbReference type="PDB" id="3AOU">
    <property type="method" value="X-ray"/>
    <property type="resolution" value="3.14 A"/>
    <property type="chains" value="A/B/C/D/E/F/G/H/I/J=1-156"/>
</dbReference>
<dbReference type="PDB" id="8WCI">
    <property type="method" value="EM"/>
    <property type="resolution" value="2.20 A"/>
    <property type="chains" value="A/B/C/D/E/F/G/H/I/J=1-156"/>
</dbReference>
<dbReference type="PDBsum" id="2BL2"/>
<dbReference type="PDBsum" id="2CYD"/>
<dbReference type="PDBsum" id="2DB4"/>
<dbReference type="PDBsum" id="3AOU"/>
<dbReference type="PDBsum" id="8WCI"/>
<dbReference type="EMDB" id="EMD-37440"/>
<dbReference type="SMR" id="P43457"/>
<dbReference type="DIP" id="DIP-46127N"/>
<dbReference type="DrugBank" id="DB02043">
    <property type="generic name" value="1,2-Dipalmitoyl-Phosphatidyl-Glycerole"/>
</dbReference>
<dbReference type="DrugBank" id="DB02686">
    <property type="generic name" value="Undecyl-Beta-D-Maltopyranoside"/>
</dbReference>
<dbReference type="TCDB" id="3.A.2.2.2">
    <property type="family name" value="the h+- or na+-translocating f-type, v-type and a-type atpase (f-atpase) superfamily"/>
</dbReference>
<dbReference type="KEGG" id="ehr:EHR_08240"/>
<dbReference type="eggNOG" id="COG0636">
    <property type="taxonomic scope" value="Bacteria"/>
</dbReference>
<dbReference type="HOGENOM" id="CLU_126047_0_0_9"/>
<dbReference type="OrthoDB" id="384481at2"/>
<dbReference type="BioCyc" id="MetaCyc:MONOMER-14153"/>
<dbReference type="EvolutionaryTrace" id="P43457"/>
<dbReference type="Proteomes" id="UP000002895">
    <property type="component" value="Chromosome"/>
</dbReference>
<dbReference type="GO" id="GO:0005886">
    <property type="term" value="C:plasma membrane"/>
    <property type="evidence" value="ECO:0007669"/>
    <property type="project" value="UniProtKB-SubCell"/>
</dbReference>
<dbReference type="GO" id="GO:0033179">
    <property type="term" value="C:proton-transporting V-type ATPase, V0 domain"/>
    <property type="evidence" value="ECO:0007669"/>
    <property type="project" value="InterPro"/>
</dbReference>
<dbReference type="GO" id="GO:0042802">
    <property type="term" value="F:identical protein binding"/>
    <property type="evidence" value="ECO:0000353"/>
    <property type="project" value="IntAct"/>
</dbReference>
<dbReference type="GO" id="GO:0046961">
    <property type="term" value="F:proton-transporting ATPase activity, rotational mechanism"/>
    <property type="evidence" value="ECO:0007669"/>
    <property type="project" value="InterPro"/>
</dbReference>
<dbReference type="GO" id="GO:0006814">
    <property type="term" value="P:sodium ion transport"/>
    <property type="evidence" value="ECO:0007669"/>
    <property type="project" value="UniProtKB-KW"/>
</dbReference>
<dbReference type="CDD" id="cd18179">
    <property type="entry name" value="ATP-synt_Vo_Ao_c_NTPK_rpt1"/>
    <property type="match status" value="1"/>
</dbReference>
<dbReference type="CDD" id="cd18180">
    <property type="entry name" value="ATP-synt_Vo_Ao_c_NTPK_rpt2"/>
    <property type="match status" value="1"/>
</dbReference>
<dbReference type="FunFam" id="1.20.120.610:FF:000005">
    <property type="entry name" value="V-type sodium ATPase subunit K"/>
    <property type="match status" value="1"/>
</dbReference>
<dbReference type="Gene3D" id="1.20.120.610">
    <property type="entry name" value="lithium bound rotor ring of v- atpase"/>
    <property type="match status" value="1"/>
</dbReference>
<dbReference type="InterPro" id="IPR002379">
    <property type="entry name" value="ATPase_proteolipid_c-like_dom"/>
</dbReference>
<dbReference type="InterPro" id="IPR000245">
    <property type="entry name" value="ATPase_proteolipid_csu"/>
</dbReference>
<dbReference type="InterPro" id="IPR035921">
    <property type="entry name" value="F/V-ATP_Csub_sf"/>
</dbReference>
<dbReference type="NCBIfam" id="NF005124">
    <property type="entry name" value="PRK06558.1"/>
    <property type="match status" value="1"/>
</dbReference>
<dbReference type="PANTHER" id="PTHR10263">
    <property type="entry name" value="V-TYPE PROTON ATPASE PROTEOLIPID SUBUNIT"/>
    <property type="match status" value="1"/>
</dbReference>
<dbReference type="Pfam" id="PF00137">
    <property type="entry name" value="ATP-synt_C"/>
    <property type="match status" value="2"/>
</dbReference>
<dbReference type="PRINTS" id="PR00122">
    <property type="entry name" value="VACATPASE"/>
</dbReference>
<dbReference type="SUPFAM" id="SSF81333">
    <property type="entry name" value="F1F0 ATP synthase subunit C"/>
    <property type="match status" value="2"/>
</dbReference>
<proteinExistence type="evidence at protein level"/>
<protein>
    <recommendedName>
        <fullName>V-type sodium ATPase subunit K</fullName>
    </recommendedName>
    <alternativeName>
        <fullName>Na(+)-translocating ATPase subunit K</fullName>
    </alternativeName>
    <alternativeName>
        <fullName>Sodium ATPase proteolipid component</fullName>
    </alternativeName>
</protein>
<gene>
    <name type="primary">ntpK</name>
    <name type="synonym">ntpN</name>
    <name type="ordered locus">EHR_08240</name>
</gene>
<sequence length="156" mass="16037">MMDYLITQNGGMVFAVLAMATATIFSGIGSAKGVGMTGEAAAALTTSQPEKFGQALILQLLPGTQGLYGFVIAFLIFINLGSDMSVVQGLNFLGASLPIAFTGLFSGIAQGKVAAAGIQILAKKPEHATKGIIFAAMVETYAILGFVISFLLVLNA</sequence>
<evidence type="ECO:0000255" key="1"/>
<evidence type="ECO:0000305" key="2"/>
<evidence type="ECO:0007829" key="3">
    <source>
        <dbReference type="PDB" id="2BL2"/>
    </source>
</evidence>
<evidence type="ECO:0007829" key="4">
    <source>
        <dbReference type="PDB" id="2DB4"/>
    </source>
</evidence>
<evidence type="ECO:0007829" key="5">
    <source>
        <dbReference type="PDB" id="3AOU"/>
    </source>
</evidence>
<organism>
    <name type="scientific">Enterococcus hirae (strain ATCC 9790 / DSM 20160 / JCM 8729 / LMG 6399 / NBRC 3181 / NCIMB 6459 / NCDO 1258 / NCTC 12367 / WDCM 00089 / R)</name>
    <dbReference type="NCBI Taxonomy" id="768486"/>
    <lineage>
        <taxon>Bacteria</taxon>
        <taxon>Bacillati</taxon>
        <taxon>Bacillota</taxon>
        <taxon>Bacilli</taxon>
        <taxon>Lactobacillales</taxon>
        <taxon>Enterococcaceae</taxon>
        <taxon>Enterococcus</taxon>
    </lineage>
</organism>
<comment type="function">
    <text>Involved in ATP-driven sodium extrusion.</text>
</comment>
<comment type="interaction">
    <interactant intactId="EBI-15709960">
        <id>P43457</id>
    </interactant>
    <interactant intactId="EBI-15709960">
        <id>P43457</id>
        <label>ntpK</label>
    </interactant>
    <organismsDiffer>false</organismsDiffer>
    <experiments>3</experiments>
</comment>
<comment type="subcellular location">
    <subcellularLocation>
        <location evidence="2">Cell membrane</location>
        <topology evidence="2">Multi-pass membrane protein</topology>
    </subcellularLocation>
</comment>
<comment type="PTM">
    <text>The N-terminus is blocked.</text>
</comment>
<comment type="similarity">
    <text evidence="2">Belongs to the V-ATPase proteolipid subunit family.</text>
</comment>
<accession>P43457</accession>
<accession>I6S1L2</accession>